<dbReference type="EMBL" id="AE010299">
    <property type="protein sequence ID" value="AAM07841.1"/>
    <property type="molecule type" value="Genomic_DNA"/>
</dbReference>
<dbReference type="RefSeq" id="WP_011024377.1">
    <property type="nucleotide sequence ID" value="NC_003552.1"/>
</dbReference>
<dbReference type="SMR" id="Q8THL3"/>
<dbReference type="FunCoup" id="Q8THL3">
    <property type="interactions" value="96"/>
</dbReference>
<dbReference type="STRING" id="188937.MA_4501"/>
<dbReference type="EnsemblBacteria" id="AAM07841">
    <property type="protein sequence ID" value="AAM07841"/>
    <property type="gene ID" value="MA_4501"/>
</dbReference>
<dbReference type="GeneID" id="1476395"/>
<dbReference type="KEGG" id="mac:MA_4501"/>
<dbReference type="HOGENOM" id="CLU_128576_0_0_2"/>
<dbReference type="InParanoid" id="Q8THL3"/>
<dbReference type="OrthoDB" id="7000at2157"/>
<dbReference type="PhylomeDB" id="Q8THL3"/>
<dbReference type="Proteomes" id="UP000002487">
    <property type="component" value="Chromosome"/>
</dbReference>
<dbReference type="GO" id="GO:0009347">
    <property type="term" value="C:aspartate carbamoyltransferase complex"/>
    <property type="evidence" value="ECO:0000318"/>
    <property type="project" value="GO_Central"/>
</dbReference>
<dbReference type="GO" id="GO:0046872">
    <property type="term" value="F:metal ion binding"/>
    <property type="evidence" value="ECO:0007669"/>
    <property type="project" value="UniProtKB-KW"/>
</dbReference>
<dbReference type="GO" id="GO:0006207">
    <property type="term" value="P:'de novo' pyrimidine nucleobase biosynthetic process"/>
    <property type="evidence" value="ECO:0000318"/>
    <property type="project" value="GO_Central"/>
</dbReference>
<dbReference type="GO" id="GO:0006221">
    <property type="term" value="P:pyrimidine nucleotide biosynthetic process"/>
    <property type="evidence" value="ECO:0007669"/>
    <property type="project" value="UniProtKB-UniRule"/>
</dbReference>
<dbReference type="Gene3D" id="2.30.30.20">
    <property type="entry name" value="Aspartate carbamoyltransferase regulatory subunit, C-terminal domain"/>
    <property type="match status" value="1"/>
</dbReference>
<dbReference type="Gene3D" id="3.30.70.140">
    <property type="entry name" value="Aspartate carbamoyltransferase regulatory subunit, N-terminal domain"/>
    <property type="match status" value="1"/>
</dbReference>
<dbReference type="HAMAP" id="MF_00002">
    <property type="entry name" value="Asp_carb_tr_reg"/>
    <property type="match status" value="1"/>
</dbReference>
<dbReference type="InterPro" id="IPR020545">
    <property type="entry name" value="Asp_carbamoyltransf_reg_N"/>
</dbReference>
<dbReference type="InterPro" id="IPR002801">
    <property type="entry name" value="Asp_carbamoylTrfase_reg"/>
</dbReference>
<dbReference type="InterPro" id="IPR020542">
    <property type="entry name" value="Asp_carbamoyltrfase_reg_C"/>
</dbReference>
<dbReference type="InterPro" id="IPR036792">
    <property type="entry name" value="Asp_carbatrfase_reg_C_sf"/>
</dbReference>
<dbReference type="InterPro" id="IPR036793">
    <property type="entry name" value="Asp_carbatrfase_reg_N_sf"/>
</dbReference>
<dbReference type="NCBIfam" id="TIGR00240">
    <property type="entry name" value="ATCase_reg"/>
    <property type="match status" value="1"/>
</dbReference>
<dbReference type="PANTHER" id="PTHR35805">
    <property type="entry name" value="ASPARTATE CARBAMOYLTRANSFERASE REGULATORY CHAIN"/>
    <property type="match status" value="1"/>
</dbReference>
<dbReference type="PANTHER" id="PTHR35805:SF1">
    <property type="entry name" value="ASPARTATE CARBAMOYLTRANSFERASE REGULATORY CHAIN"/>
    <property type="match status" value="1"/>
</dbReference>
<dbReference type="Pfam" id="PF01948">
    <property type="entry name" value="PyrI"/>
    <property type="match status" value="1"/>
</dbReference>
<dbReference type="Pfam" id="PF02748">
    <property type="entry name" value="PyrI_C"/>
    <property type="match status" value="1"/>
</dbReference>
<dbReference type="SUPFAM" id="SSF57825">
    <property type="entry name" value="Aspartate carbamoyltransferase, Regulatory-chain, C-terminal domain"/>
    <property type="match status" value="1"/>
</dbReference>
<dbReference type="SUPFAM" id="SSF54893">
    <property type="entry name" value="Aspartate carbamoyltransferase, Regulatory-chain, N-terminal domain"/>
    <property type="match status" value="1"/>
</dbReference>
<feature type="chain" id="PRO_0000142330" description="Aspartate carbamoyltransferase regulatory chain">
    <location>
        <begin position="1"/>
        <end position="156"/>
    </location>
</feature>
<feature type="binding site" evidence="1">
    <location>
        <position position="109"/>
    </location>
    <ligand>
        <name>Zn(2+)</name>
        <dbReference type="ChEBI" id="CHEBI:29105"/>
    </ligand>
</feature>
<feature type="binding site" evidence="1">
    <location>
        <position position="114"/>
    </location>
    <ligand>
        <name>Zn(2+)</name>
        <dbReference type="ChEBI" id="CHEBI:29105"/>
    </ligand>
</feature>
<feature type="binding site" evidence="1">
    <location>
        <position position="140"/>
    </location>
    <ligand>
        <name>Zn(2+)</name>
        <dbReference type="ChEBI" id="CHEBI:29105"/>
    </ligand>
</feature>
<feature type="binding site" evidence="1">
    <location>
        <position position="143"/>
    </location>
    <ligand>
        <name>Zn(2+)</name>
        <dbReference type="ChEBI" id="CHEBI:29105"/>
    </ligand>
</feature>
<organism>
    <name type="scientific">Methanosarcina acetivorans (strain ATCC 35395 / DSM 2834 / JCM 12185 / C2A)</name>
    <dbReference type="NCBI Taxonomy" id="188937"/>
    <lineage>
        <taxon>Archaea</taxon>
        <taxon>Methanobacteriati</taxon>
        <taxon>Methanobacteriota</taxon>
        <taxon>Stenosarchaea group</taxon>
        <taxon>Methanomicrobia</taxon>
        <taxon>Methanosarcinales</taxon>
        <taxon>Methanosarcinaceae</taxon>
        <taxon>Methanosarcina</taxon>
    </lineage>
</organism>
<evidence type="ECO:0000255" key="1">
    <source>
        <dbReference type="HAMAP-Rule" id="MF_00002"/>
    </source>
</evidence>
<gene>
    <name evidence="1" type="primary">pyrI</name>
    <name type="ordered locus">MA_4501</name>
</gene>
<protein>
    <recommendedName>
        <fullName evidence="1">Aspartate carbamoyltransferase regulatory chain</fullName>
    </recommendedName>
</protein>
<accession>Q8THL3</accession>
<name>PYRI_METAC</name>
<sequence length="156" mass="17336">MKEKRDLKIQAIENGTVIDHITAGQALNVLRILRISSAFRATVSFVMNAPGARGKKDVVKIEGKELSVEELNRIALISPKATINIIRDFEVVQKNKVVLPSYVEGVVRCMNSNCISNSSEPIKSKFSVLRTEEEGVSLHCLYCEHVISEEIAENLL</sequence>
<reference key="1">
    <citation type="journal article" date="2002" name="Genome Res.">
        <title>The genome of Methanosarcina acetivorans reveals extensive metabolic and physiological diversity.</title>
        <authorList>
            <person name="Galagan J.E."/>
            <person name="Nusbaum C."/>
            <person name="Roy A."/>
            <person name="Endrizzi M.G."/>
            <person name="Macdonald P."/>
            <person name="FitzHugh W."/>
            <person name="Calvo S."/>
            <person name="Engels R."/>
            <person name="Smirnov S."/>
            <person name="Atnoor D."/>
            <person name="Brown A."/>
            <person name="Allen N."/>
            <person name="Naylor J."/>
            <person name="Stange-Thomann N."/>
            <person name="DeArellano K."/>
            <person name="Johnson R."/>
            <person name="Linton L."/>
            <person name="McEwan P."/>
            <person name="McKernan K."/>
            <person name="Talamas J."/>
            <person name="Tirrell A."/>
            <person name="Ye W."/>
            <person name="Zimmer A."/>
            <person name="Barber R.D."/>
            <person name="Cann I."/>
            <person name="Graham D.E."/>
            <person name="Grahame D.A."/>
            <person name="Guss A.M."/>
            <person name="Hedderich R."/>
            <person name="Ingram-Smith C."/>
            <person name="Kuettner H.C."/>
            <person name="Krzycki J.A."/>
            <person name="Leigh J.A."/>
            <person name="Li W."/>
            <person name="Liu J."/>
            <person name="Mukhopadhyay B."/>
            <person name="Reeve J.N."/>
            <person name="Smith K."/>
            <person name="Springer T.A."/>
            <person name="Umayam L.A."/>
            <person name="White O."/>
            <person name="White R.H."/>
            <person name="de Macario E.C."/>
            <person name="Ferry J.G."/>
            <person name="Jarrell K.F."/>
            <person name="Jing H."/>
            <person name="Macario A.J.L."/>
            <person name="Paulsen I.T."/>
            <person name="Pritchett M."/>
            <person name="Sowers K.R."/>
            <person name="Swanson R.V."/>
            <person name="Zinder S.H."/>
            <person name="Lander E."/>
            <person name="Metcalf W.W."/>
            <person name="Birren B."/>
        </authorList>
    </citation>
    <scope>NUCLEOTIDE SEQUENCE [LARGE SCALE GENOMIC DNA]</scope>
    <source>
        <strain>ATCC 35395 / DSM 2834 / JCM 12185 / C2A</strain>
    </source>
</reference>
<keyword id="KW-0479">Metal-binding</keyword>
<keyword id="KW-0665">Pyrimidine biosynthesis</keyword>
<keyword id="KW-1185">Reference proteome</keyword>
<keyword id="KW-0862">Zinc</keyword>
<comment type="function">
    <text evidence="1">Involved in allosteric regulation of aspartate carbamoyltransferase.</text>
</comment>
<comment type="cofactor">
    <cofactor evidence="1">
        <name>Zn(2+)</name>
        <dbReference type="ChEBI" id="CHEBI:29105"/>
    </cofactor>
    <text evidence="1">Binds 1 zinc ion per subunit.</text>
</comment>
<comment type="subunit">
    <text evidence="1">Contains catalytic and regulatory chains.</text>
</comment>
<comment type="similarity">
    <text evidence="1">Belongs to the PyrI family.</text>
</comment>
<proteinExistence type="inferred from homology"/>